<comment type="function">
    <text>Produces ATP from ADP in the presence of a proton gradient across the membrane. The alpha chain is a regulatory subunit.</text>
</comment>
<comment type="catalytic activity">
    <reaction evidence="1">
        <text>ATP + H2O + 4 H(+)(in) = ADP + phosphate + 5 H(+)(out)</text>
        <dbReference type="Rhea" id="RHEA:57720"/>
        <dbReference type="ChEBI" id="CHEBI:15377"/>
        <dbReference type="ChEBI" id="CHEBI:15378"/>
        <dbReference type="ChEBI" id="CHEBI:30616"/>
        <dbReference type="ChEBI" id="CHEBI:43474"/>
        <dbReference type="ChEBI" id="CHEBI:456216"/>
        <dbReference type="EC" id="7.1.2.2"/>
    </reaction>
</comment>
<comment type="subunit">
    <text evidence="1">F-type ATPases have 2 components, CF(1) - the catalytic core - and CF(0) - the membrane proton channel. CF(1) has five subunits: alpha(3), beta(3), gamma(1), delta(1), epsilon(1). CF(0) has four main subunits: a, b, b' and c.</text>
</comment>
<comment type="subcellular location">
    <subcellularLocation>
        <location evidence="1">Plastid</location>
        <location evidence="1">Chloroplast thylakoid membrane</location>
        <topology evidence="1">Peripheral membrane protein</topology>
    </subcellularLocation>
</comment>
<comment type="similarity">
    <text evidence="1">Belongs to the ATPase alpha/beta chains family.</text>
</comment>
<gene>
    <name evidence="1" type="primary">atpA</name>
</gene>
<organism>
    <name type="scientific">Oryza nivara</name>
    <name type="common">Indian wild rice</name>
    <name type="synonym">Oryza sativa f. spontanea</name>
    <dbReference type="NCBI Taxonomy" id="4536"/>
    <lineage>
        <taxon>Eukaryota</taxon>
        <taxon>Viridiplantae</taxon>
        <taxon>Streptophyta</taxon>
        <taxon>Embryophyta</taxon>
        <taxon>Tracheophyta</taxon>
        <taxon>Spermatophyta</taxon>
        <taxon>Magnoliopsida</taxon>
        <taxon>Liliopsida</taxon>
        <taxon>Poales</taxon>
        <taxon>Poaceae</taxon>
        <taxon>BOP clade</taxon>
        <taxon>Oryzoideae</taxon>
        <taxon>Oryzeae</taxon>
        <taxon>Oryzinae</taxon>
        <taxon>Oryza</taxon>
    </lineage>
</organism>
<dbReference type="EC" id="7.1.2.2" evidence="1"/>
<dbReference type="EMBL" id="AP006728">
    <property type="protein sequence ID" value="BAD26775.1"/>
    <property type="molecule type" value="Genomic_DNA"/>
</dbReference>
<dbReference type="RefSeq" id="YP_052746.1">
    <property type="nucleotide sequence ID" value="NC_005973.1"/>
</dbReference>
<dbReference type="SMR" id="Q6ENH7"/>
<dbReference type="STRING" id="4536.Q6ENH7"/>
<dbReference type="GeneID" id="2885907"/>
<dbReference type="eggNOG" id="KOG1353">
    <property type="taxonomic scope" value="Eukaryota"/>
</dbReference>
<dbReference type="Proteomes" id="UP000006591">
    <property type="component" value="Chloroplast"/>
</dbReference>
<dbReference type="GO" id="GO:0009535">
    <property type="term" value="C:chloroplast thylakoid membrane"/>
    <property type="evidence" value="ECO:0007669"/>
    <property type="project" value="UniProtKB-SubCell"/>
</dbReference>
<dbReference type="GO" id="GO:0009536">
    <property type="term" value="C:plastid"/>
    <property type="evidence" value="ECO:0000305"/>
    <property type="project" value="Gramene"/>
</dbReference>
<dbReference type="GO" id="GO:0045259">
    <property type="term" value="C:proton-transporting ATP synthase complex"/>
    <property type="evidence" value="ECO:0007669"/>
    <property type="project" value="UniProtKB-KW"/>
</dbReference>
<dbReference type="GO" id="GO:0043531">
    <property type="term" value="F:ADP binding"/>
    <property type="evidence" value="ECO:0007669"/>
    <property type="project" value="TreeGrafter"/>
</dbReference>
<dbReference type="GO" id="GO:0005524">
    <property type="term" value="F:ATP binding"/>
    <property type="evidence" value="ECO:0007669"/>
    <property type="project" value="UniProtKB-UniRule"/>
</dbReference>
<dbReference type="GO" id="GO:0046933">
    <property type="term" value="F:proton-transporting ATP synthase activity, rotational mechanism"/>
    <property type="evidence" value="ECO:0007669"/>
    <property type="project" value="UniProtKB-UniRule"/>
</dbReference>
<dbReference type="CDD" id="cd18113">
    <property type="entry name" value="ATP-synt_F1_alpha_C"/>
    <property type="match status" value="1"/>
</dbReference>
<dbReference type="CDD" id="cd18116">
    <property type="entry name" value="ATP-synt_F1_alpha_N"/>
    <property type="match status" value="1"/>
</dbReference>
<dbReference type="CDD" id="cd01132">
    <property type="entry name" value="F1-ATPase_alpha_CD"/>
    <property type="match status" value="1"/>
</dbReference>
<dbReference type="FunFam" id="1.20.150.20:FF:000001">
    <property type="entry name" value="ATP synthase subunit alpha"/>
    <property type="match status" value="1"/>
</dbReference>
<dbReference type="FunFam" id="2.40.30.20:FF:000001">
    <property type="entry name" value="ATP synthase subunit alpha"/>
    <property type="match status" value="1"/>
</dbReference>
<dbReference type="FunFam" id="3.40.50.300:FF:000002">
    <property type="entry name" value="ATP synthase subunit alpha"/>
    <property type="match status" value="1"/>
</dbReference>
<dbReference type="Gene3D" id="2.40.30.20">
    <property type="match status" value="1"/>
</dbReference>
<dbReference type="Gene3D" id="1.20.150.20">
    <property type="entry name" value="ATP synthase alpha/beta chain, C-terminal domain"/>
    <property type="match status" value="1"/>
</dbReference>
<dbReference type="Gene3D" id="3.40.50.300">
    <property type="entry name" value="P-loop containing nucleotide triphosphate hydrolases"/>
    <property type="match status" value="1"/>
</dbReference>
<dbReference type="HAMAP" id="MF_01346">
    <property type="entry name" value="ATP_synth_alpha_bact"/>
    <property type="match status" value="1"/>
</dbReference>
<dbReference type="InterPro" id="IPR023366">
    <property type="entry name" value="ATP_synth_asu-like_sf"/>
</dbReference>
<dbReference type="InterPro" id="IPR000793">
    <property type="entry name" value="ATP_synth_asu_C"/>
</dbReference>
<dbReference type="InterPro" id="IPR038376">
    <property type="entry name" value="ATP_synth_asu_C_sf"/>
</dbReference>
<dbReference type="InterPro" id="IPR033732">
    <property type="entry name" value="ATP_synth_F1_a_nt-bd_dom"/>
</dbReference>
<dbReference type="InterPro" id="IPR005294">
    <property type="entry name" value="ATP_synth_F1_asu"/>
</dbReference>
<dbReference type="InterPro" id="IPR020003">
    <property type="entry name" value="ATPase_a/bsu_AS"/>
</dbReference>
<dbReference type="InterPro" id="IPR004100">
    <property type="entry name" value="ATPase_F1/V1/A1_a/bsu_N"/>
</dbReference>
<dbReference type="InterPro" id="IPR036121">
    <property type="entry name" value="ATPase_F1/V1/A1_a/bsu_N_sf"/>
</dbReference>
<dbReference type="InterPro" id="IPR000194">
    <property type="entry name" value="ATPase_F1/V1/A1_a/bsu_nucl-bd"/>
</dbReference>
<dbReference type="InterPro" id="IPR027417">
    <property type="entry name" value="P-loop_NTPase"/>
</dbReference>
<dbReference type="NCBIfam" id="TIGR00962">
    <property type="entry name" value="atpA"/>
    <property type="match status" value="1"/>
</dbReference>
<dbReference type="NCBIfam" id="NF009884">
    <property type="entry name" value="PRK13343.1"/>
    <property type="match status" value="1"/>
</dbReference>
<dbReference type="PANTHER" id="PTHR48082:SF6">
    <property type="entry name" value="ATP SYNTHASE SUBUNIT ALPHA, CHLOROPLASTIC"/>
    <property type="match status" value="1"/>
</dbReference>
<dbReference type="PANTHER" id="PTHR48082">
    <property type="entry name" value="ATP SYNTHASE SUBUNIT ALPHA, MITOCHONDRIAL"/>
    <property type="match status" value="1"/>
</dbReference>
<dbReference type="Pfam" id="PF00006">
    <property type="entry name" value="ATP-synt_ab"/>
    <property type="match status" value="1"/>
</dbReference>
<dbReference type="Pfam" id="PF00306">
    <property type="entry name" value="ATP-synt_ab_C"/>
    <property type="match status" value="1"/>
</dbReference>
<dbReference type="Pfam" id="PF02874">
    <property type="entry name" value="ATP-synt_ab_N"/>
    <property type="match status" value="1"/>
</dbReference>
<dbReference type="PIRSF" id="PIRSF039088">
    <property type="entry name" value="F_ATPase_subunit_alpha"/>
    <property type="match status" value="1"/>
</dbReference>
<dbReference type="SUPFAM" id="SSF47917">
    <property type="entry name" value="C-terminal domain of alpha and beta subunits of F1 ATP synthase"/>
    <property type="match status" value="1"/>
</dbReference>
<dbReference type="SUPFAM" id="SSF50615">
    <property type="entry name" value="N-terminal domain of alpha and beta subunits of F1 ATP synthase"/>
    <property type="match status" value="1"/>
</dbReference>
<dbReference type="SUPFAM" id="SSF52540">
    <property type="entry name" value="P-loop containing nucleoside triphosphate hydrolases"/>
    <property type="match status" value="1"/>
</dbReference>
<dbReference type="PROSITE" id="PS00152">
    <property type="entry name" value="ATPASE_ALPHA_BETA"/>
    <property type="match status" value="1"/>
</dbReference>
<geneLocation type="chloroplast"/>
<proteinExistence type="inferred from homology"/>
<name>ATPA_ORYNI</name>
<accession>Q6ENH7</accession>
<feature type="chain" id="PRO_0000144385" description="ATP synthase subunit alpha, chloroplastic">
    <location>
        <begin position="1"/>
        <end position="507"/>
    </location>
</feature>
<feature type="binding site" evidence="1">
    <location>
        <begin position="170"/>
        <end position="177"/>
    </location>
    <ligand>
        <name>ATP</name>
        <dbReference type="ChEBI" id="CHEBI:30616"/>
    </ligand>
</feature>
<feature type="site" description="Required for activity" evidence="1">
    <location>
        <position position="363"/>
    </location>
</feature>
<keyword id="KW-0066">ATP synthesis</keyword>
<keyword id="KW-0067">ATP-binding</keyword>
<keyword id="KW-0139">CF(1)</keyword>
<keyword id="KW-0150">Chloroplast</keyword>
<keyword id="KW-0375">Hydrogen ion transport</keyword>
<keyword id="KW-0406">Ion transport</keyword>
<keyword id="KW-0472">Membrane</keyword>
<keyword id="KW-0547">Nucleotide-binding</keyword>
<keyword id="KW-0934">Plastid</keyword>
<keyword id="KW-1185">Reference proteome</keyword>
<keyword id="KW-0793">Thylakoid</keyword>
<keyword id="KW-1278">Translocase</keyword>
<keyword id="KW-0813">Transport</keyword>
<protein>
    <recommendedName>
        <fullName evidence="1">ATP synthase subunit alpha, chloroplastic</fullName>
        <ecNumber evidence="1">7.1.2.2</ecNumber>
    </recommendedName>
    <alternativeName>
        <fullName evidence="1">ATP synthase F1 sector subunit alpha</fullName>
    </alternativeName>
    <alternativeName>
        <fullName evidence="1">F-ATPase subunit alpha</fullName>
    </alternativeName>
</protein>
<evidence type="ECO:0000255" key="1">
    <source>
        <dbReference type="HAMAP-Rule" id="MF_01346"/>
    </source>
</evidence>
<evidence type="ECO:0000312" key="2">
    <source>
        <dbReference type="Proteomes" id="UP000006591"/>
    </source>
</evidence>
<reference key="1">
    <citation type="journal article" date="2004" name="Gene">
        <title>The complete nucleotide sequence of wild rice (Oryza nivara) chloroplast genome: first genome wide comparative sequence analysis of wild and cultivated rice.</title>
        <authorList>
            <person name="Masood M.S."/>
            <person name="Nishikawa T."/>
            <person name="Fukuoka S."/>
            <person name="Njenga P.K."/>
            <person name="Tsudzuki T."/>
            <person name="Kadowaki K."/>
        </authorList>
    </citation>
    <scope>NUCLEOTIDE SEQUENCE [LARGE SCALE GENOMIC DNA]</scope>
    <source>
        <strain evidence="2">cv. SL10</strain>
    </source>
</reference>
<sequence length="507" mass="55665">MATLRVDEIHKILRERIEQYNRKVGIENIGRVVQVGDGIARIIGLGEIMSGELVEFAEGTRGIALNLESKNVGIVLMGDGLMIQEGSFVKATGRIAQIPVSEAYLGRVINALAKPIDGRGEIVASESRLIESPAPGIISRRSVYEPLQTGLIAIDSMIPIGRGQRELIIGDRQTGKTAVATDTILNQKGQDVICVYVAIGQRASSVAQVVTTFHEEGAMEYTIVVAEMADSPATLQYLAPYTGAALAEYFMYRERHTLIIYDDLSKQAQAYRQMSLLLRRPPGREAYPGDVFYLHSRLLERAAKLNSLLGEGSMTALPIVETQSGDVSAYIPTNVISITDGQIFLSADLFNAGIRPAINVGISVSRVGSAAQIKAMKQVAGKSKLELAQFAELQAFAQFASALDKTSQNQLARGRRLRELLKQSQANPLPVEEQIATIYIGTRGYLDSLEIGQVKKFLDELRKHLKDTKPQFQEIISSSKTFTEEAEILLKEAIQEQLERFSLQEQT</sequence>